<comment type="similarity">
    <text evidence="1">Belongs to the bacterial ribosomal protein bL34 family.</text>
</comment>
<gene>
    <name evidence="1" type="primary">rpmH</name>
    <name type="ordered locus">Maqu_3898</name>
</gene>
<sequence>MKRTFQPSVLKRKRVHGFRARMATANGRKVLSRRRAKGRARLSA</sequence>
<evidence type="ECO:0000255" key="1">
    <source>
        <dbReference type="HAMAP-Rule" id="MF_00391"/>
    </source>
</evidence>
<evidence type="ECO:0000305" key="2"/>
<organism>
    <name type="scientific">Marinobacter nauticus (strain ATCC 700491 / DSM 11845 / VT8)</name>
    <name type="common">Marinobacter aquaeolei</name>
    <dbReference type="NCBI Taxonomy" id="351348"/>
    <lineage>
        <taxon>Bacteria</taxon>
        <taxon>Pseudomonadati</taxon>
        <taxon>Pseudomonadota</taxon>
        <taxon>Gammaproteobacteria</taxon>
        <taxon>Pseudomonadales</taxon>
        <taxon>Marinobacteraceae</taxon>
        <taxon>Marinobacter</taxon>
    </lineage>
</organism>
<proteinExistence type="inferred from homology"/>
<feature type="chain" id="PRO_1000013370" description="Large ribosomal subunit protein bL34">
    <location>
        <begin position="1"/>
        <end position="44"/>
    </location>
</feature>
<dbReference type="EMBL" id="CP000514">
    <property type="protein sequence ID" value="ABM20966.1"/>
    <property type="molecule type" value="Genomic_DNA"/>
</dbReference>
<dbReference type="RefSeq" id="WP_008940054.1">
    <property type="nucleotide sequence ID" value="NC_008740.1"/>
</dbReference>
<dbReference type="SMR" id="A1U7J7"/>
<dbReference type="STRING" id="351348.Maqu_3898"/>
<dbReference type="GeneID" id="31823236"/>
<dbReference type="KEGG" id="maq:Maqu_3898"/>
<dbReference type="eggNOG" id="COG0230">
    <property type="taxonomic scope" value="Bacteria"/>
</dbReference>
<dbReference type="HOGENOM" id="CLU_129938_2_0_6"/>
<dbReference type="OrthoDB" id="9804164at2"/>
<dbReference type="Proteomes" id="UP000000998">
    <property type="component" value="Chromosome"/>
</dbReference>
<dbReference type="GO" id="GO:1990904">
    <property type="term" value="C:ribonucleoprotein complex"/>
    <property type="evidence" value="ECO:0007669"/>
    <property type="project" value="UniProtKB-KW"/>
</dbReference>
<dbReference type="GO" id="GO:0005840">
    <property type="term" value="C:ribosome"/>
    <property type="evidence" value="ECO:0007669"/>
    <property type="project" value="UniProtKB-KW"/>
</dbReference>
<dbReference type="GO" id="GO:0003735">
    <property type="term" value="F:structural constituent of ribosome"/>
    <property type="evidence" value="ECO:0007669"/>
    <property type="project" value="InterPro"/>
</dbReference>
<dbReference type="GO" id="GO:0006412">
    <property type="term" value="P:translation"/>
    <property type="evidence" value="ECO:0007669"/>
    <property type="project" value="UniProtKB-UniRule"/>
</dbReference>
<dbReference type="FunFam" id="1.10.287.3980:FF:000001">
    <property type="entry name" value="Mitochondrial ribosomal protein L34"/>
    <property type="match status" value="1"/>
</dbReference>
<dbReference type="Gene3D" id="1.10.287.3980">
    <property type="match status" value="1"/>
</dbReference>
<dbReference type="HAMAP" id="MF_00391">
    <property type="entry name" value="Ribosomal_bL34"/>
    <property type="match status" value="1"/>
</dbReference>
<dbReference type="InterPro" id="IPR000271">
    <property type="entry name" value="Ribosomal_bL34"/>
</dbReference>
<dbReference type="InterPro" id="IPR020939">
    <property type="entry name" value="Ribosomal_bL34_CS"/>
</dbReference>
<dbReference type="NCBIfam" id="TIGR01030">
    <property type="entry name" value="rpmH_bact"/>
    <property type="match status" value="1"/>
</dbReference>
<dbReference type="PANTHER" id="PTHR14503:SF4">
    <property type="entry name" value="LARGE RIBOSOMAL SUBUNIT PROTEIN BL34M"/>
    <property type="match status" value="1"/>
</dbReference>
<dbReference type="PANTHER" id="PTHR14503">
    <property type="entry name" value="MITOCHONDRIAL RIBOSOMAL PROTEIN 34 FAMILY MEMBER"/>
    <property type="match status" value="1"/>
</dbReference>
<dbReference type="Pfam" id="PF00468">
    <property type="entry name" value="Ribosomal_L34"/>
    <property type="match status" value="1"/>
</dbReference>
<dbReference type="PROSITE" id="PS00784">
    <property type="entry name" value="RIBOSOMAL_L34"/>
    <property type="match status" value="1"/>
</dbReference>
<name>RL34_MARN8</name>
<accession>A1U7J7</accession>
<protein>
    <recommendedName>
        <fullName evidence="1">Large ribosomal subunit protein bL34</fullName>
    </recommendedName>
    <alternativeName>
        <fullName evidence="2">50S ribosomal protein L34</fullName>
    </alternativeName>
</protein>
<keyword id="KW-0687">Ribonucleoprotein</keyword>
<keyword id="KW-0689">Ribosomal protein</keyword>
<reference key="1">
    <citation type="journal article" date="2011" name="Appl. Environ. Microbiol.">
        <title>Genomic potential of Marinobacter aquaeolei, a biogeochemical 'opportunitroph'.</title>
        <authorList>
            <person name="Singer E."/>
            <person name="Webb E.A."/>
            <person name="Nelson W.C."/>
            <person name="Heidelberg J.F."/>
            <person name="Ivanova N."/>
            <person name="Pati A."/>
            <person name="Edwards K.J."/>
        </authorList>
    </citation>
    <scope>NUCLEOTIDE SEQUENCE [LARGE SCALE GENOMIC DNA]</scope>
    <source>
        <strain>ATCC 700491 / DSM 11845 / VT8</strain>
    </source>
</reference>